<accession>A0A2R4SV19</accession>
<comment type="function">
    <text evidence="3">Antifibrinolytic and antimicrobial serine protease inhibitor. Inhibits trypsin, plasmin and microbial serine proteases but not chymotrypsin, thrombin and elastase. Inhibits the plasmin-mediated degradation of fibrin to fibrin degradation products. Also binds to bacterial and fungal surfaces and exhibits antimicrobial activity against fungi as well as Gram-positive and Gram-negative bacteria.</text>
</comment>
<comment type="subcellular location">
    <subcellularLocation>
        <location evidence="6">Secreted</location>
    </subcellularLocation>
</comment>
<comment type="tissue specificity">
    <text evidence="3">Specifically expressed by the venom gland.</text>
</comment>
<comment type="similarity">
    <text evidence="5">Belongs to the serine protease inhibitor-like (TIL domain-containing) family.</text>
</comment>
<feature type="signal peptide" evidence="2">
    <location>
        <begin position="1"/>
        <end position="23"/>
    </location>
</feature>
<feature type="chain" id="PRO_5015284604" description="Venom serine protease inhibitor" evidence="6">
    <location>
        <begin position="24"/>
        <end position="87"/>
    </location>
</feature>
<feature type="domain" description="TIL" evidence="2">
    <location>
        <begin position="27"/>
        <end position="81"/>
    </location>
</feature>
<feature type="site" description="Reactive bond" evidence="6">
    <location>
        <begin position="55"/>
        <end position="56"/>
    </location>
</feature>
<feature type="disulfide bond" evidence="1">
    <location>
        <begin position="27"/>
        <end position="61"/>
    </location>
</feature>
<feature type="disulfide bond" evidence="1">
    <location>
        <begin position="36"/>
        <end position="57"/>
    </location>
</feature>
<feature type="disulfide bond" evidence="1">
    <location>
        <begin position="40"/>
        <end position="53"/>
    </location>
</feature>
<feature type="disulfide bond" evidence="1">
    <location>
        <begin position="44"/>
        <end position="81"/>
    </location>
</feature>
<feature type="disulfide bond" evidence="1">
    <location>
        <begin position="63"/>
        <end position="75"/>
    </location>
</feature>
<name>TIL6_APICE</name>
<organism>
    <name type="scientific">Apis cerana</name>
    <name type="common">Indian honeybee</name>
    <dbReference type="NCBI Taxonomy" id="7461"/>
    <lineage>
        <taxon>Eukaryota</taxon>
        <taxon>Metazoa</taxon>
        <taxon>Ecdysozoa</taxon>
        <taxon>Arthropoda</taxon>
        <taxon>Hexapoda</taxon>
        <taxon>Insecta</taxon>
        <taxon>Pterygota</taxon>
        <taxon>Neoptera</taxon>
        <taxon>Endopterygota</taxon>
        <taxon>Hymenoptera</taxon>
        <taxon>Apocrita</taxon>
        <taxon>Aculeata</taxon>
        <taxon>Apoidea</taxon>
        <taxon>Anthophila</taxon>
        <taxon>Apidae</taxon>
        <taxon>Apis</taxon>
    </lineage>
</organism>
<proteinExistence type="evidence at transcript level"/>
<sequence>MPRLVLVSFLFLAIFSVFIGGFAKSKCPRNEIFTRCHAACQPSCARLARKPFCIKICKPGCICTSGYLRNKNNVCVPRSRCFSGRLL</sequence>
<evidence type="ECO:0000250" key="1">
    <source>
        <dbReference type="UniProtKB" id="P07851"/>
    </source>
</evidence>
<evidence type="ECO:0000255" key="2"/>
<evidence type="ECO:0000269" key="3">
    <source>
    </source>
</evidence>
<evidence type="ECO:0000303" key="4">
    <source>
    </source>
</evidence>
<evidence type="ECO:0000305" key="5"/>
<evidence type="ECO:0000305" key="6">
    <source>
    </source>
</evidence>
<evidence type="ECO:0000312" key="7">
    <source>
        <dbReference type="EMBL" id="AVZ66243.1"/>
    </source>
</evidence>
<evidence type="ECO:0000312" key="8">
    <source>
        <dbReference type="EMBL" id="AVZ66244.1"/>
    </source>
</evidence>
<reference key="1">
    <citation type="journal article" date="2017" name="Comp. Biochem. Physiol.">
        <title>Anti-fibrinolytic and anti-microbial activities of a serine protease inhibitor from honeybee (Apis cerana) venom.</title>
        <authorList>
            <person name="Yang J."/>
            <person name="Lee K.S."/>
            <person name="Kim B.Y."/>
            <person name="Choi Y.S."/>
            <person name="Yoon H.J."/>
            <person name="Jia J."/>
            <person name="Jin B.R."/>
        </authorList>
    </citation>
    <scope>NUCLEOTIDE SEQUENCE [MRNA]</scope>
    <scope>FUNCTION</scope>
    <scope>TISSUE SPECIFICITY</scope>
</reference>
<dbReference type="EMBL" id="MF281990">
    <property type="protein sequence ID" value="AVZ66243.1"/>
    <property type="molecule type" value="mRNA"/>
</dbReference>
<dbReference type="EMBL" id="MF281991">
    <property type="protein sequence ID" value="AVZ66244.1"/>
    <property type="molecule type" value="Genomic_DNA"/>
</dbReference>
<dbReference type="RefSeq" id="XP_016915259.1">
    <property type="nucleotide sequence ID" value="XM_017059770.3"/>
</dbReference>
<dbReference type="SMR" id="A0A2R4SV19"/>
<dbReference type="GeneID" id="107999756"/>
<dbReference type="KEGG" id="acer:107999756"/>
<dbReference type="GO" id="GO:0005576">
    <property type="term" value="C:extracellular region"/>
    <property type="evidence" value="ECO:0000304"/>
    <property type="project" value="UniProtKB"/>
</dbReference>
<dbReference type="GO" id="GO:0004867">
    <property type="term" value="F:serine-type endopeptidase inhibitor activity"/>
    <property type="evidence" value="ECO:0000314"/>
    <property type="project" value="UniProtKB"/>
</dbReference>
<dbReference type="GO" id="GO:0042742">
    <property type="term" value="P:defense response to bacterium"/>
    <property type="evidence" value="ECO:0000314"/>
    <property type="project" value="UniProtKB"/>
</dbReference>
<dbReference type="GO" id="GO:0050832">
    <property type="term" value="P:defense response to fungus"/>
    <property type="evidence" value="ECO:0000314"/>
    <property type="project" value="UniProtKB"/>
</dbReference>
<dbReference type="GO" id="GO:0031640">
    <property type="term" value="P:killing of cells of another organism"/>
    <property type="evidence" value="ECO:0000314"/>
    <property type="project" value="UniProtKB"/>
</dbReference>
<dbReference type="CDD" id="cd19941">
    <property type="entry name" value="TIL"/>
    <property type="match status" value="1"/>
</dbReference>
<dbReference type="FunFam" id="2.10.25.10:FF:000055">
    <property type="entry name" value="alpha-tectorin isoform X1"/>
    <property type="match status" value="1"/>
</dbReference>
<dbReference type="Gene3D" id="2.10.25.10">
    <property type="entry name" value="Laminin"/>
    <property type="match status" value="1"/>
</dbReference>
<dbReference type="InterPro" id="IPR036084">
    <property type="entry name" value="Ser_inhib-like_sf"/>
</dbReference>
<dbReference type="InterPro" id="IPR051368">
    <property type="entry name" value="SerProtInhib-TIL_Domain"/>
</dbReference>
<dbReference type="InterPro" id="IPR002919">
    <property type="entry name" value="TIL_dom"/>
</dbReference>
<dbReference type="PANTHER" id="PTHR23259">
    <property type="entry name" value="RIDDLE"/>
    <property type="match status" value="1"/>
</dbReference>
<dbReference type="PANTHER" id="PTHR23259:SF82">
    <property type="entry name" value="SERINE PROTEASE INHIBITOR 1 PROTEIN"/>
    <property type="match status" value="1"/>
</dbReference>
<dbReference type="Pfam" id="PF01826">
    <property type="entry name" value="TIL"/>
    <property type="match status" value="1"/>
</dbReference>
<dbReference type="SUPFAM" id="SSF57567">
    <property type="entry name" value="Serine protease inhibitors"/>
    <property type="match status" value="1"/>
</dbReference>
<protein>
    <recommendedName>
        <fullName evidence="4">Venom serine protease inhibitor</fullName>
        <shortName evidence="4">AcVSPI</shortName>
        <shortName evidence="7 8">VSPI</shortName>
    </recommendedName>
    <alternativeName>
        <fullName evidence="4">Allergen Api m 6-like peptide</fullName>
    </alternativeName>
</protein>
<keyword id="KW-0044">Antibiotic</keyword>
<keyword id="KW-0929">Antimicrobial</keyword>
<keyword id="KW-1015">Disulfide bond</keyword>
<keyword id="KW-0295">Fungicide</keyword>
<keyword id="KW-1199">Hemostasis impairing toxin</keyword>
<keyword id="KW-0646">Protease inhibitor</keyword>
<keyword id="KW-0964">Secreted</keyword>
<keyword id="KW-0722">Serine protease inhibitor</keyword>
<keyword id="KW-0732">Signal</keyword>
<keyword id="KW-0800">Toxin</keyword>